<keyword id="KW-0903">Direct protein sequencing</keyword>
<keyword id="KW-0326">Glycosidase</keyword>
<keyword id="KW-0378">Hydrolase</keyword>
<keyword id="KW-0964">Secreted</keyword>
<keyword id="KW-0732">Signal</keyword>
<organism>
    <name type="scientific">Staphylococcus aureus (strain COL)</name>
    <dbReference type="NCBI Taxonomy" id="93062"/>
    <lineage>
        <taxon>Bacteria</taxon>
        <taxon>Bacillati</taxon>
        <taxon>Bacillota</taxon>
        <taxon>Bacilli</taxon>
        <taxon>Bacillales</taxon>
        <taxon>Staphylococcaceae</taxon>
        <taxon>Staphylococcus</taxon>
    </lineage>
</organism>
<gene>
    <name type="primary">isaA</name>
    <name type="ordered locus">SACOL2584</name>
</gene>
<protein>
    <recommendedName>
        <fullName>Probable transglycosylase IsaA</fullName>
        <ecNumber>3.2.-.-</ecNumber>
    </recommendedName>
    <alternativeName>
        <fullName>Immunodominant staphylococcal antigen A</fullName>
    </alternativeName>
</protein>
<reference key="1">
    <citation type="journal article" date="2005" name="J. Bacteriol.">
        <title>Insights on evolution of virulence and resistance from the complete genome analysis of an early methicillin-resistant Staphylococcus aureus strain and a biofilm-producing methicillin-resistant Staphylococcus epidermidis strain.</title>
        <authorList>
            <person name="Gill S.R."/>
            <person name="Fouts D.E."/>
            <person name="Archer G.L."/>
            <person name="Mongodin E.F."/>
            <person name="DeBoy R.T."/>
            <person name="Ravel J."/>
            <person name="Paulsen I.T."/>
            <person name="Kolonay J.F."/>
            <person name="Brinkac L.M."/>
            <person name="Beanan M.J."/>
            <person name="Dodson R.J."/>
            <person name="Daugherty S.C."/>
            <person name="Madupu R."/>
            <person name="Angiuoli S.V."/>
            <person name="Durkin A.S."/>
            <person name="Haft D.H."/>
            <person name="Vamathevan J.J."/>
            <person name="Khouri H."/>
            <person name="Utterback T.R."/>
            <person name="Lee C."/>
            <person name="Dimitrov G."/>
            <person name="Jiang L."/>
            <person name="Qin H."/>
            <person name="Weidman J."/>
            <person name="Tran K."/>
            <person name="Kang K.H."/>
            <person name="Hance I.R."/>
            <person name="Nelson K.E."/>
            <person name="Fraser C.M."/>
        </authorList>
    </citation>
    <scope>NUCLEOTIDE SEQUENCE [LARGE SCALE GENOMIC DNA]</scope>
    <source>
        <strain>COL</strain>
    </source>
</reference>
<reference key="2">
    <citation type="journal article" date="2001" name="Proteomics">
        <title>Extracellular proteins of Staphylococcus aureus and the role of SarA and sigma B.</title>
        <authorList>
            <person name="Ziebandt A.-K."/>
            <person name="Weber H."/>
            <person name="Rudolph J."/>
            <person name="Schmid R."/>
            <person name="Hoeper D."/>
            <person name="Engelmann S."/>
            <person name="Hecker M."/>
        </authorList>
    </citation>
    <scope>PROTEIN SEQUENCE OF 30-36</scope>
    <scope>SUBCELLULAR LOCATION</scope>
</reference>
<sequence>MKKTIMASSLAVALGVTGYAAGTGHQAHAAEVNVDQAHLVDLAHNHQDQLNAAPIKDGAYDIHFVKDGFQYNFTSNGTTWSWSYEAANGQTAGFSNVAGADYTTSYNQGSNVQSVSYNAQSSNSNVEAVSAPTYHNYSTSTTSSSVRLSNGNTAGATGSSAAQIMAQRTGVSASTWAAIIARESNGQVNAYNPSGASGLFQTMPGWGPTNTVDQQINAAVKAYKAQGLGAWGF</sequence>
<comment type="function">
    <text evidence="1">Is able to cleave peptidoglycan.</text>
</comment>
<comment type="subcellular location">
    <subcellularLocation>
        <location evidence="2">Secreted</location>
    </subcellularLocation>
</comment>
<comment type="similarity">
    <text evidence="3">Belongs to the transglycosylase family. IsaA subfamily.</text>
</comment>
<accession>Q5HCY1</accession>
<evidence type="ECO:0000250" key="1"/>
<evidence type="ECO:0000269" key="2">
    <source>
    </source>
</evidence>
<evidence type="ECO:0000305" key="3"/>
<feature type="signal peptide" evidence="2">
    <location>
        <begin position="1"/>
        <end position="29"/>
    </location>
</feature>
<feature type="chain" id="PRO_0000045204" description="Probable transglycosylase IsaA">
    <location>
        <begin position="30"/>
        <end position="233"/>
    </location>
</feature>
<name>ISAA_STAAC</name>
<proteinExistence type="evidence at protein level"/>
<dbReference type="EC" id="3.2.-.-"/>
<dbReference type="EMBL" id="CP000046">
    <property type="protein sequence ID" value="AAW38586.1"/>
    <property type="molecule type" value="Genomic_DNA"/>
</dbReference>
<dbReference type="RefSeq" id="WP_000751267.1">
    <property type="nucleotide sequence ID" value="NZ_JBGOFO010000001.1"/>
</dbReference>
<dbReference type="SMR" id="Q5HCY1"/>
<dbReference type="KEGG" id="sac:SACOL2584"/>
<dbReference type="HOGENOM" id="CLU_099865_0_0_9"/>
<dbReference type="Proteomes" id="UP000000530">
    <property type="component" value="Chromosome"/>
</dbReference>
<dbReference type="GO" id="GO:0005576">
    <property type="term" value="C:extracellular region"/>
    <property type="evidence" value="ECO:0007669"/>
    <property type="project" value="UniProtKB-SubCell"/>
</dbReference>
<dbReference type="GO" id="GO:0016798">
    <property type="term" value="F:hydrolase activity, acting on glycosyl bonds"/>
    <property type="evidence" value="ECO:0007669"/>
    <property type="project" value="UniProtKB-KW"/>
</dbReference>
<dbReference type="Gene3D" id="1.10.530.10">
    <property type="match status" value="1"/>
</dbReference>
<dbReference type="InterPro" id="IPR023346">
    <property type="entry name" value="Lysozyme-like_dom_sf"/>
</dbReference>
<dbReference type="InterPro" id="IPR008258">
    <property type="entry name" value="Transglycosylase_SLT_dom_1"/>
</dbReference>
<dbReference type="Pfam" id="PF01464">
    <property type="entry name" value="SLT"/>
    <property type="match status" value="1"/>
</dbReference>
<dbReference type="SUPFAM" id="SSF53955">
    <property type="entry name" value="Lysozyme-like"/>
    <property type="match status" value="1"/>
</dbReference>